<reference key="1">
    <citation type="journal article" date="2008" name="BMC Genomics">
        <title>The genome sequence of the fish pathogen Aliivibrio salmonicida strain LFI1238 shows extensive evidence of gene decay.</title>
        <authorList>
            <person name="Hjerde E."/>
            <person name="Lorentzen M.S."/>
            <person name="Holden M.T."/>
            <person name="Seeger K."/>
            <person name="Paulsen S."/>
            <person name="Bason N."/>
            <person name="Churcher C."/>
            <person name="Harris D."/>
            <person name="Norbertczak H."/>
            <person name="Quail M.A."/>
            <person name="Sanders S."/>
            <person name="Thurston S."/>
            <person name="Parkhill J."/>
            <person name="Willassen N.P."/>
            <person name="Thomson N.R."/>
        </authorList>
    </citation>
    <scope>NUCLEOTIDE SEQUENCE [LARGE SCALE GENOMIC DNA]</scope>
    <source>
        <strain>LFI1238</strain>
    </source>
</reference>
<comment type="function">
    <text evidence="1">Involved in the binding of tRNA to the ribosomes.</text>
</comment>
<comment type="subunit">
    <text evidence="1">Part of the 30S ribosomal subunit.</text>
</comment>
<comment type="similarity">
    <text evidence="1">Belongs to the universal ribosomal protein uS10 family.</text>
</comment>
<organism>
    <name type="scientific">Aliivibrio salmonicida (strain LFI1238)</name>
    <name type="common">Vibrio salmonicida (strain LFI1238)</name>
    <dbReference type="NCBI Taxonomy" id="316275"/>
    <lineage>
        <taxon>Bacteria</taxon>
        <taxon>Pseudomonadati</taxon>
        <taxon>Pseudomonadota</taxon>
        <taxon>Gammaproteobacteria</taxon>
        <taxon>Vibrionales</taxon>
        <taxon>Vibrionaceae</taxon>
        <taxon>Aliivibrio</taxon>
    </lineage>
</organism>
<name>RS10_ALISL</name>
<gene>
    <name evidence="1" type="primary">rpsJ</name>
    <name type="ordered locus">VSAL_I0319</name>
</gene>
<evidence type="ECO:0000255" key="1">
    <source>
        <dbReference type="HAMAP-Rule" id="MF_00508"/>
    </source>
</evidence>
<evidence type="ECO:0000305" key="2"/>
<proteinExistence type="inferred from homology"/>
<accession>B6EPS4</accession>
<sequence>MQNQRIRIRLKAFDYKLIDQSTAEIVETAKRTGAQVRGPIPLPTRKERFTVLTSPHVNKDARDQYEIRTHKRLIDIVEPTDKTVDALMRLDLAAGVDVQISLG</sequence>
<feature type="chain" id="PRO_1000127072" description="Small ribosomal subunit protein uS10">
    <location>
        <begin position="1"/>
        <end position="103"/>
    </location>
</feature>
<protein>
    <recommendedName>
        <fullName evidence="1">Small ribosomal subunit protein uS10</fullName>
    </recommendedName>
    <alternativeName>
        <fullName evidence="2">30S ribosomal protein S10</fullName>
    </alternativeName>
</protein>
<keyword id="KW-0687">Ribonucleoprotein</keyword>
<keyword id="KW-0689">Ribosomal protein</keyword>
<dbReference type="EMBL" id="FM178379">
    <property type="protein sequence ID" value="CAQ78004.1"/>
    <property type="molecule type" value="Genomic_DNA"/>
</dbReference>
<dbReference type="RefSeq" id="WP_005417222.1">
    <property type="nucleotide sequence ID" value="NC_011312.1"/>
</dbReference>
<dbReference type="SMR" id="B6EPS4"/>
<dbReference type="GeneID" id="56276456"/>
<dbReference type="KEGG" id="vsa:VSAL_I0319"/>
<dbReference type="eggNOG" id="COG0051">
    <property type="taxonomic scope" value="Bacteria"/>
</dbReference>
<dbReference type="HOGENOM" id="CLU_122625_1_3_6"/>
<dbReference type="Proteomes" id="UP000001730">
    <property type="component" value="Chromosome 1"/>
</dbReference>
<dbReference type="GO" id="GO:1990904">
    <property type="term" value="C:ribonucleoprotein complex"/>
    <property type="evidence" value="ECO:0007669"/>
    <property type="project" value="UniProtKB-KW"/>
</dbReference>
<dbReference type="GO" id="GO:0005840">
    <property type="term" value="C:ribosome"/>
    <property type="evidence" value="ECO:0007669"/>
    <property type="project" value="UniProtKB-KW"/>
</dbReference>
<dbReference type="GO" id="GO:0003735">
    <property type="term" value="F:structural constituent of ribosome"/>
    <property type="evidence" value="ECO:0007669"/>
    <property type="project" value="InterPro"/>
</dbReference>
<dbReference type="GO" id="GO:0000049">
    <property type="term" value="F:tRNA binding"/>
    <property type="evidence" value="ECO:0007669"/>
    <property type="project" value="UniProtKB-UniRule"/>
</dbReference>
<dbReference type="GO" id="GO:0006412">
    <property type="term" value="P:translation"/>
    <property type="evidence" value="ECO:0007669"/>
    <property type="project" value="UniProtKB-UniRule"/>
</dbReference>
<dbReference type="FunFam" id="3.30.70.600:FF:000001">
    <property type="entry name" value="30S ribosomal protein S10"/>
    <property type="match status" value="1"/>
</dbReference>
<dbReference type="Gene3D" id="3.30.70.600">
    <property type="entry name" value="Ribosomal protein S10 domain"/>
    <property type="match status" value="1"/>
</dbReference>
<dbReference type="HAMAP" id="MF_00508">
    <property type="entry name" value="Ribosomal_uS10"/>
    <property type="match status" value="1"/>
</dbReference>
<dbReference type="InterPro" id="IPR001848">
    <property type="entry name" value="Ribosomal_uS10"/>
</dbReference>
<dbReference type="InterPro" id="IPR018268">
    <property type="entry name" value="Ribosomal_uS10_CS"/>
</dbReference>
<dbReference type="InterPro" id="IPR027486">
    <property type="entry name" value="Ribosomal_uS10_dom"/>
</dbReference>
<dbReference type="InterPro" id="IPR036838">
    <property type="entry name" value="Ribosomal_uS10_dom_sf"/>
</dbReference>
<dbReference type="NCBIfam" id="NF001861">
    <property type="entry name" value="PRK00596.1"/>
    <property type="match status" value="1"/>
</dbReference>
<dbReference type="NCBIfam" id="TIGR01049">
    <property type="entry name" value="rpsJ_bact"/>
    <property type="match status" value="1"/>
</dbReference>
<dbReference type="PANTHER" id="PTHR11700">
    <property type="entry name" value="30S RIBOSOMAL PROTEIN S10 FAMILY MEMBER"/>
    <property type="match status" value="1"/>
</dbReference>
<dbReference type="Pfam" id="PF00338">
    <property type="entry name" value="Ribosomal_S10"/>
    <property type="match status" value="1"/>
</dbReference>
<dbReference type="PRINTS" id="PR00971">
    <property type="entry name" value="RIBOSOMALS10"/>
</dbReference>
<dbReference type="SMART" id="SM01403">
    <property type="entry name" value="Ribosomal_S10"/>
    <property type="match status" value="1"/>
</dbReference>
<dbReference type="SUPFAM" id="SSF54999">
    <property type="entry name" value="Ribosomal protein S10"/>
    <property type="match status" value="1"/>
</dbReference>
<dbReference type="PROSITE" id="PS00361">
    <property type="entry name" value="RIBOSOMAL_S10"/>
    <property type="match status" value="1"/>
</dbReference>